<name>SWT2B_ORYSI</name>
<comment type="function">
    <text evidence="1">Mediates both low-affinity uptake and efflux of sugar across the plasma membrane.</text>
</comment>
<comment type="subunit">
    <text evidence="1">Forms homooligomers and/or heterooligomers.</text>
</comment>
<comment type="subcellular location">
    <subcellularLocation>
        <location evidence="1">Cell membrane</location>
        <topology evidence="1">Multi-pass membrane protein</topology>
    </subcellularLocation>
</comment>
<comment type="similarity">
    <text evidence="3">Belongs to the SWEET sugar transporter family.</text>
</comment>
<feature type="chain" id="PRO_0000404141" description="Bidirectional sugar transporter SWEET2b">
    <location>
        <begin position="1"/>
        <end position="230"/>
    </location>
</feature>
<feature type="topological domain" description="Extracellular" evidence="2">
    <location>
        <begin position="1"/>
        <end position="6"/>
    </location>
</feature>
<feature type="transmembrane region" description="Helical; Name=1" evidence="2">
    <location>
        <begin position="7"/>
        <end position="27"/>
    </location>
</feature>
<feature type="topological domain" description="Cytoplasmic" evidence="2">
    <location>
        <begin position="28"/>
        <end position="45"/>
    </location>
</feature>
<feature type="transmembrane region" description="Helical; Name=2" evidence="2">
    <location>
        <begin position="46"/>
        <end position="66"/>
    </location>
</feature>
<feature type="topological domain" description="Extracellular" evidence="2">
    <location>
        <begin position="67"/>
        <end position="72"/>
    </location>
</feature>
<feature type="transmembrane region" description="Helical; Name=3" evidence="2">
    <location>
        <begin position="73"/>
        <end position="93"/>
    </location>
</feature>
<feature type="topological domain" description="Cytoplasmic" evidence="2">
    <location>
        <begin position="94"/>
        <end position="103"/>
    </location>
</feature>
<feature type="transmembrane region" description="Helical; Name=4" evidence="2">
    <location>
        <begin position="104"/>
        <end position="124"/>
    </location>
</feature>
<feature type="topological domain" description="Extracellular" evidence="2">
    <location>
        <begin position="125"/>
        <end position="137"/>
    </location>
</feature>
<feature type="transmembrane region" description="Helical; Name=5" evidence="2">
    <location>
        <begin position="138"/>
        <end position="158"/>
    </location>
</feature>
<feature type="topological domain" description="Cytoplasmic" evidence="2">
    <location>
        <begin position="159"/>
        <end position="167"/>
    </location>
</feature>
<feature type="transmembrane region" description="Helical; Name=6" evidence="2">
    <location>
        <begin position="168"/>
        <end position="188"/>
    </location>
</feature>
<feature type="topological domain" description="Extracellular" evidence="2">
    <location>
        <begin position="189"/>
        <end position="190"/>
    </location>
</feature>
<feature type="transmembrane region" description="Helical; Name=7" evidence="2">
    <location>
        <begin position="191"/>
        <end position="211"/>
    </location>
</feature>
<feature type="topological domain" description="Cytoplasmic" evidence="2">
    <location>
        <begin position="212"/>
        <end position="230"/>
    </location>
</feature>
<feature type="domain" description="MtN3/slv 1">
    <location>
        <begin position="13"/>
        <end position="98"/>
    </location>
</feature>
<feature type="domain" description="MtN3/slv 2">
    <location>
        <begin position="133"/>
        <end position="217"/>
    </location>
</feature>
<proteinExistence type="inferred from homology"/>
<gene>
    <name type="primary">SWEET2B</name>
    <name type="ORF">OsI_03405</name>
</gene>
<sequence>MDSLYDISCFAAGLAGNIFALALFLSPVTTFKRILKAKSTERFDGLPYLFSLLNCLICLWYGLPWVADGRLLVATVNGIGAVFQLAYICLFIFYADSRKTRMKIIGLLVLVVCGFALVSHASVFFFDQPLRQQFVGAVSMASLISMFASPLAVMGVVIRSESVEFMPFYLSLSTFLMSASFALYGLLLRDFFIYFPNGLGLILGAMQLALYAYYSRKWRGQDSSAPLLLA</sequence>
<dbReference type="EMBL" id="CM000126">
    <property type="protein sequence ID" value="EEC71341.1"/>
    <property type="molecule type" value="Genomic_DNA"/>
</dbReference>
<dbReference type="SMR" id="B8A833"/>
<dbReference type="EnsemblPlants" id="BGIOSGA004272-TA">
    <property type="protein sequence ID" value="BGIOSGA004272-PA"/>
    <property type="gene ID" value="BGIOSGA004272"/>
</dbReference>
<dbReference type="EnsemblPlants" id="OsGoSa_01g0029500.01">
    <property type="protein sequence ID" value="OsGoSa_01g0029500.01"/>
    <property type="gene ID" value="OsGoSa_01g0029500"/>
</dbReference>
<dbReference type="EnsemblPlants" id="OsIR64_01g0029050.01">
    <property type="protein sequence ID" value="OsIR64_01g0029050.01"/>
    <property type="gene ID" value="OsIR64_01g0029050"/>
</dbReference>
<dbReference type="EnsemblPlants" id="OsKYG_01g0029240.01">
    <property type="protein sequence ID" value="OsKYG_01g0029240.01"/>
    <property type="gene ID" value="OsKYG_01g0029240"/>
</dbReference>
<dbReference type="EnsemblPlants" id="OsLaMu_01g0029480.01">
    <property type="protein sequence ID" value="OsLaMu_01g0029480.01"/>
    <property type="gene ID" value="OsLaMu_01g0029480"/>
</dbReference>
<dbReference type="EnsemblPlants" id="OsLima_01g0029300.01">
    <property type="protein sequence ID" value="OsLima_01g0029300.01"/>
    <property type="gene ID" value="OsLima_01g0029300"/>
</dbReference>
<dbReference type="EnsemblPlants" id="OsLiXu_01g0029670.01">
    <property type="protein sequence ID" value="OsLiXu_01g0029670.01"/>
    <property type="gene ID" value="OsLiXu_01g0029670"/>
</dbReference>
<dbReference type="EnsemblPlants" id="OsMH63_01G030120_01">
    <property type="protein sequence ID" value="OsMH63_01G030120_01"/>
    <property type="gene ID" value="OsMH63_01G030120"/>
</dbReference>
<dbReference type="EnsemblPlants" id="OsPr106_01g0029320.01">
    <property type="protein sequence ID" value="OsPr106_01g0029320.01"/>
    <property type="gene ID" value="OsPr106_01g0029320"/>
</dbReference>
<dbReference type="EnsemblPlants" id="OsZS97_01G029470_01">
    <property type="protein sequence ID" value="OsZS97_01G029470_01"/>
    <property type="gene ID" value="OsZS97_01G029470"/>
</dbReference>
<dbReference type="Gramene" id="BGIOSGA004272-TA">
    <property type="protein sequence ID" value="BGIOSGA004272-PA"/>
    <property type="gene ID" value="BGIOSGA004272"/>
</dbReference>
<dbReference type="Gramene" id="OsGoSa_01g0029500.01">
    <property type="protein sequence ID" value="OsGoSa_01g0029500.01"/>
    <property type="gene ID" value="OsGoSa_01g0029500"/>
</dbReference>
<dbReference type="Gramene" id="OsIR64_01g0029050.01">
    <property type="protein sequence ID" value="OsIR64_01g0029050.01"/>
    <property type="gene ID" value="OsIR64_01g0029050"/>
</dbReference>
<dbReference type="Gramene" id="OsKYG_01g0029240.01">
    <property type="protein sequence ID" value="OsKYG_01g0029240.01"/>
    <property type="gene ID" value="OsKYG_01g0029240"/>
</dbReference>
<dbReference type="Gramene" id="OsLaMu_01g0029480.01">
    <property type="protein sequence ID" value="OsLaMu_01g0029480.01"/>
    <property type="gene ID" value="OsLaMu_01g0029480"/>
</dbReference>
<dbReference type="Gramene" id="OsLima_01g0029300.01">
    <property type="protein sequence ID" value="OsLima_01g0029300.01"/>
    <property type="gene ID" value="OsLima_01g0029300"/>
</dbReference>
<dbReference type="Gramene" id="OsLiXu_01g0029670.01">
    <property type="protein sequence ID" value="OsLiXu_01g0029670.01"/>
    <property type="gene ID" value="OsLiXu_01g0029670"/>
</dbReference>
<dbReference type="Gramene" id="OsMH63_01G030120_01">
    <property type="protein sequence ID" value="OsMH63_01G030120_01"/>
    <property type="gene ID" value="OsMH63_01G030120"/>
</dbReference>
<dbReference type="Gramene" id="OsPr106_01g0029320.01">
    <property type="protein sequence ID" value="OsPr106_01g0029320.01"/>
    <property type="gene ID" value="OsPr106_01g0029320"/>
</dbReference>
<dbReference type="Gramene" id="OsZS97_01G029470_01">
    <property type="protein sequence ID" value="OsZS97_01G029470_01"/>
    <property type="gene ID" value="OsZS97_01G029470"/>
</dbReference>
<dbReference type="HOGENOM" id="CLU_048643_1_1_1"/>
<dbReference type="OMA" id="CHSWLLY"/>
<dbReference type="OrthoDB" id="409725at2759"/>
<dbReference type="Proteomes" id="UP000007015">
    <property type="component" value="Chromosome 1"/>
</dbReference>
<dbReference type="GO" id="GO:0005886">
    <property type="term" value="C:plasma membrane"/>
    <property type="evidence" value="ECO:0000250"/>
    <property type="project" value="UniProtKB"/>
</dbReference>
<dbReference type="GO" id="GO:0042802">
    <property type="term" value="F:identical protein binding"/>
    <property type="evidence" value="ECO:0007669"/>
    <property type="project" value="EnsemblPlants"/>
</dbReference>
<dbReference type="GO" id="GO:0051119">
    <property type="term" value="F:sugar transmembrane transporter activity"/>
    <property type="evidence" value="ECO:0000250"/>
    <property type="project" value="UniProtKB"/>
</dbReference>
<dbReference type="FunFam" id="1.20.1280.290:FF:000001">
    <property type="entry name" value="Bidirectional sugar transporter SWEET"/>
    <property type="match status" value="1"/>
</dbReference>
<dbReference type="FunFam" id="1.20.1280.290:FF:000002">
    <property type="entry name" value="Bidirectional sugar transporter SWEET"/>
    <property type="match status" value="1"/>
</dbReference>
<dbReference type="Gene3D" id="1.20.1280.290">
    <property type="match status" value="2"/>
</dbReference>
<dbReference type="InterPro" id="IPR047664">
    <property type="entry name" value="SWEET"/>
</dbReference>
<dbReference type="InterPro" id="IPR004316">
    <property type="entry name" value="SWEET_rpt"/>
</dbReference>
<dbReference type="PANTHER" id="PTHR10791:SF54">
    <property type="entry name" value="BIDIRECTIONAL SUGAR TRANSPORTER SWEET2B"/>
    <property type="match status" value="1"/>
</dbReference>
<dbReference type="PANTHER" id="PTHR10791">
    <property type="entry name" value="RAG1-ACTIVATING PROTEIN 1"/>
    <property type="match status" value="1"/>
</dbReference>
<dbReference type="Pfam" id="PF03083">
    <property type="entry name" value="MtN3_slv"/>
    <property type="match status" value="2"/>
</dbReference>
<protein>
    <recommendedName>
        <fullName>Bidirectional sugar transporter SWEET2b</fullName>
        <shortName>OsSWEET2b</shortName>
    </recommendedName>
</protein>
<evidence type="ECO:0000250" key="1">
    <source>
        <dbReference type="UniProtKB" id="Q8L9J7"/>
    </source>
</evidence>
<evidence type="ECO:0000255" key="2"/>
<evidence type="ECO:0000305" key="3"/>
<accession>B8A833</accession>
<organism>
    <name type="scientific">Oryza sativa subsp. indica</name>
    <name type="common">Rice</name>
    <dbReference type="NCBI Taxonomy" id="39946"/>
    <lineage>
        <taxon>Eukaryota</taxon>
        <taxon>Viridiplantae</taxon>
        <taxon>Streptophyta</taxon>
        <taxon>Embryophyta</taxon>
        <taxon>Tracheophyta</taxon>
        <taxon>Spermatophyta</taxon>
        <taxon>Magnoliopsida</taxon>
        <taxon>Liliopsida</taxon>
        <taxon>Poales</taxon>
        <taxon>Poaceae</taxon>
        <taxon>BOP clade</taxon>
        <taxon>Oryzoideae</taxon>
        <taxon>Oryzeae</taxon>
        <taxon>Oryzinae</taxon>
        <taxon>Oryza</taxon>
        <taxon>Oryza sativa</taxon>
    </lineage>
</organism>
<keyword id="KW-1003">Cell membrane</keyword>
<keyword id="KW-0472">Membrane</keyword>
<keyword id="KW-1185">Reference proteome</keyword>
<keyword id="KW-0677">Repeat</keyword>
<keyword id="KW-0762">Sugar transport</keyword>
<keyword id="KW-0812">Transmembrane</keyword>
<keyword id="KW-1133">Transmembrane helix</keyword>
<keyword id="KW-0813">Transport</keyword>
<reference key="1">
    <citation type="journal article" date="2005" name="PLoS Biol.">
        <title>The genomes of Oryza sativa: a history of duplications.</title>
        <authorList>
            <person name="Yu J."/>
            <person name="Wang J."/>
            <person name="Lin W."/>
            <person name="Li S."/>
            <person name="Li H."/>
            <person name="Zhou J."/>
            <person name="Ni P."/>
            <person name="Dong W."/>
            <person name="Hu S."/>
            <person name="Zeng C."/>
            <person name="Zhang J."/>
            <person name="Zhang Y."/>
            <person name="Li R."/>
            <person name="Xu Z."/>
            <person name="Li S."/>
            <person name="Li X."/>
            <person name="Zheng H."/>
            <person name="Cong L."/>
            <person name="Lin L."/>
            <person name="Yin J."/>
            <person name="Geng J."/>
            <person name="Li G."/>
            <person name="Shi J."/>
            <person name="Liu J."/>
            <person name="Lv H."/>
            <person name="Li J."/>
            <person name="Wang J."/>
            <person name="Deng Y."/>
            <person name="Ran L."/>
            <person name="Shi X."/>
            <person name="Wang X."/>
            <person name="Wu Q."/>
            <person name="Li C."/>
            <person name="Ren X."/>
            <person name="Wang J."/>
            <person name="Wang X."/>
            <person name="Li D."/>
            <person name="Liu D."/>
            <person name="Zhang X."/>
            <person name="Ji Z."/>
            <person name="Zhao W."/>
            <person name="Sun Y."/>
            <person name="Zhang Z."/>
            <person name="Bao J."/>
            <person name="Han Y."/>
            <person name="Dong L."/>
            <person name="Ji J."/>
            <person name="Chen P."/>
            <person name="Wu S."/>
            <person name="Liu J."/>
            <person name="Xiao Y."/>
            <person name="Bu D."/>
            <person name="Tan J."/>
            <person name="Yang L."/>
            <person name="Ye C."/>
            <person name="Zhang J."/>
            <person name="Xu J."/>
            <person name="Zhou Y."/>
            <person name="Yu Y."/>
            <person name="Zhang B."/>
            <person name="Zhuang S."/>
            <person name="Wei H."/>
            <person name="Liu B."/>
            <person name="Lei M."/>
            <person name="Yu H."/>
            <person name="Li Y."/>
            <person name="Xu H."/>
            <person name="Wei S."/>
            <person name="He X."/>
            <person name="Fang L."/>
            <person name="Zhang Z."/>
            <person name="Zhang Y."/>
            <person name="Huang X."/>
            <person name="Su Z."/>
            <person name="Tong W."/>
            <person name="Li J."/>
            <person name="Tong Z."/>
            <person name="Li S."/>
            <person name="Ye J."/>
            <person name="Wang L."/>
            <person name="Fang L."/>
            <person name="Lei T."/>
            <person name="Chen C.-S."/>
            <person name="Chen H.-C."/>
            <person name="Xu Z."/>
            <person name="Li H."/>
            <person name="Huang H."/>
            <person name="Zhang F."/>
            <person name="Xu H."/>
            <person name="Li N."/>
            <person name="Zhao C."/>
            <person name="Li S."/>
            <person name="Dong L."/>
            <person name="Huang Y."/>
            <person name="Li L."/>
            <person name="Xi Y."/>
            <person name="Qi Q."/>
            <person name="Li W."/>
            <person name="Zhang B."/>
            <person name="Hu W."/>
            <person name="Zhang Y."/>
            <person name="Tian X."/>
            <person name="Jiao Y."/>
            <person name="Liang X."/>
            <person name="Jin J."/>
            <person name="Gao L."/>
            <person name="Zheng W."/>
            <person name="Hao B."/>
            <person name="Liu S.-M."/>
            <person name="Wang W."/>
            <person name="Yuan L."/>
            <person name="Cao M."/>
            <person name="McDermott J."/>
            <person name="Samudrala R."/>
            <person name="Wang J."/>
            <person name="Wong G.K.-S."/>
            <person name="Yang H."/>
        </authorList>
    </citation>
    <scope>NUCLEOTIDE SEQUENCE [LARGE SCALE GENOMIC DNA]</scope>
    <source>
        <strain>cv. 93-11</strain>
    </source>
</reference>